<keyword id="KW-0233">DNA recombination</keyword>
<keyword id="KW-0814">Transposable element</keyword>
<keyword id="KW-0815">Transposition</keyword>
<proteinExistence type="inferred from homology"/>
<name>INSA_SHIFL</name>
<sequence>MASISIRCPSCSATEGAVRNGKSTAEHQRYLCSHCRKTWQLQFTYTASQPGTHQKIIDMAMNGVGCRASARIMGVGLNTVLRHLKNSGRSR</sequence>
<protein>
    <recommendedName>
        <fullName>Insertion element IS1 protein InsA</fullName>
    </recommendedName>
</protein>
<reference key="1">
    <citation type="journal article" date="1984" name="J. Gen. Appl. Microbiol.">
        <title>An evolutionary analysis of iso-IS1 elements from Escherichia coli and Shigella strains.</title>
        <authorList>
            <person name="Ohtsubo E."/>
            <person name="Ohtsubo H."/>
            <person name="Doroszkiewicz W."/>
            <person name="Nyman K."/>
            <person name="Allen D."/>
            <person name="Davison D."/>
        </authorList>
    </citation>
    <scope>NUCLEOTIDE SEQUENCE [GENOMIC DNA]</scope>
</reference>
<evidence type="ECO:0000305" key="1"/>
<organism>
    <name type="scientific">Shigella flexneri</name>
    <dbReference type="NCBI Taxonomy" id="623"/>
    <lineage>
        <taxon>Bacteria</taxon>
        <taxon>Pseudomonadati</taxon>
        <taxon>Pseudomonadota</taxon>
        <taxon>Gammaproteobacteria</taxon>
        <taxon>Enterobacterales</taxon>
        <taxon>Enterobacteriaceae</taxon>
        <taxon>Shigella</taxon>
    </lineage>
</organism>
<dbReference type="EMBL" id="M37616">
    <property type="protein sequence ID" value="AAA96691.1"/>
    <property type="molecule type" value="Genomic_DNA"/>
</dbReference>
<dbReference type="PaxDb" id="198214-SF0019"/>
<dbReference type="GO" id="GO:0006313">
    <property type="term" value="P:DNA transposition"/>
    <property type="evidence" value="ECO:0007669"/>
    <property type="project" value="InterPro"/>
</dbReference>
<dbReference type="InterPro" id="IPR024431">
    <property type="entry name" value="InsA_HTH_dom"/>
</dbReference>
<dbReference type="InterPro" id="IPR003220">
    <property type="entry name" value="InsA_N_dom_Znf"/>
</dbReference>
<dbReference type="InterPro" id="IPR051252">
    <property type="entry name" value="IS1_transposase_InsA"/>
</dbReference>
<dbReference type="PANTHER" id="PTHR47923">
    <property type="entry name" value="INSERTION ELEMENT IS1 1 PROTEIN INSA-RELATED"/>
    <property type="match status" value="1"/>
</dbReference>
<dbReference type="PANTHER" id="PTHR47923:SF1">
    <property type="entry name" value="INSERTION ELEMENT IS1 1 PROTEIN INSA-RELATED"/>
    <property type="match status" value="1"/>
</dbReference>
<dbReference type="Pfam" id="PF12759">
    <property type="entry name" value="HTH_Tnp_IS1"/>
    <property type="match status" value="1"/>
</dbReference>
<dbReference type="Pfam" id="PF03811">
    <property type="entry name" value="Zn_ribbon_InsA"/>
    <property type="match status" value="1"/>
</dbReference>
<accession>P19763</accession>
<gene>
    <name type="primary">insA</name>
</gene>
<comment type="function">
    <text>Absolutely required for transposition of IS1.</text>
</comment>
<comment type="similarity">
    <text evidence="1">Belongs to the IS1 elements InsA family.</text>
</comment>
<feature type="chain" id="PRO_0000075400" description="Insertion element IS1 protein InsA">
    <location>
        <begin position="1"/>
        <end position="91"/>
    </location>
</feature>